<protein>
    <recommendedName>
        <fullName evidence="1">Thiamine-phosphate synthase</fullName>
        <shortName evidence="1">TP synthase</shortName>
        <shortName evidence="1">TPS</shortName>
        <ecNumber evidence="1">2.5.1.3</ecNumber>
    </recommendedName>
    <alternativeName>
        <fullName evidence="1">Thiamine-phosphate pyrophosphorylase</fullName>
        <shortName evidence="1">TMP pyrophosphorylase</shortName>
        <shortName evidence="1">TMP-PPase</shortName>
    </alternativeName>
</protein>
<evidence type="ECO:0000255" key="1">
    <source>
        <dbReference type="HAMAP-Rule" id="MF_00097"/>
    </source>
</evidence>
<proteinExistence type="inferred from homology"/>
<sequence>MYQPDFPTVPFRLGLYPVVDSVAWIERLLEAGVRTIQLRIKDKRDEEVEADVIAAIALGRRYNARLFINDYWRLAIKHRAYGVHLGQEDLETTDLKAIQAAGLRLGVSTHDDMEIDVALAAKPSYIALGHVFPTQTKQMPSAPQGLAQLASHIERLADYPTVAIGGISLERATAVLATGVGSIAVVSAITQAADWRAATAQLLDIAGVGDE</sequence>
<dbReference type="EC" id="2.5.1.3" evidence="1"/>
<dbReference type="EMBL" id="CP001144">
    <property type="protein sequence ID" value="ACH77093.1"/>
    <property type="molecule type" value="Genomic_DNA"/>
</dbReference>
<dbReference type="RefSeq" id="WP_000284639.1">
    <property type="nucleotide sequence ID" value="NC_011205.1"/>
</dbReference>
<dbReference type="SMR" id="B5FQK8"/>
<dbReference type="KEGG" id="sed:SeD_A4569"/>
<dbReference type="HOGENOM" id="CLU_018272_3_3_6"/>
<dbReference type="UniPathway" id="UPA00060">
    <property type="reaction ID" value="UER00141"/>
</dbReference>
<dbReference type="Proteomes" id="UP000008322">
    <property type="component" value="Chromosome"/>
</dbReference>
<dbReference type="GO" id="GO:0005737">
    <property type="term" value="C:cytoplasm"/>
    <property type="evidence" value="ECO:0007669"/>
    <property type="project" value="TreeGrafter"/>
</dbReference>
<dbReference type="GO" id="GO:0000287">
    <property type="term" value="F:magnesium ion binding"/>
    <property type="evidence" value="ECO:0007669"/>
    <property type="project" value="UniProtKB-UniRule"/>
</dbReference>
<dbReference type="GO" id="GO:0004789">
    <property type="term" value="F:thiamine-phosphate diphosphorylase activity"/>
    <property type="evidence" value="ECO:0007669"/>
    <property type="project" value="UniProtKB-UniRule"/>
</dbReference>
<dbReference type="GO" id="GO:0009228">
    <property type="term" value="P:thiamine biosynthetic process"/>
    <property type="evidence" value="ECO:0007669"/>
    <property type="project" value="UniProtKB-KW"/>
</dbReference>
<dbReference type="GO" id="GO:0009229">
    <property type="term" value="P:thiamine diphosphate biosynthetic process"/>
    <property type="evidence" value="ECO:0007669"/>
    <property type="project" value="UniProtKB-UniRule"/>
</dbReference>
<dbReference type="CDD" id="cd00564">
    <property type="entry name" value="TMP_TenI"/>
    <property type="match status" value="1"/>
</dbReference>
<dbReference type="FunFam" id="3.20.20.70:FF:000064">
    <property type="entry name" value="Thiamine-phosphate synthase"/>
    <property type="match status" value="1"/>
</dbReference>
<dbReference type="Gene3D" id="3.20.20.70">
    <property type="entry name" value="Aldolase class I"/>
    <property type="match status" value="1"/>
</dbReference>
<dbReference type="HAMAP" id="MF_00097">
    <property type="entry name" value="TMP_synthase"/>
    <property type="match status" value="1"/>
</dbReference>
<dbReference type="InterPro" id="IPR013785">
    <property type="entry name" value="Aldolase_TIM"/>
</dbReference>
<dbReference type="InterPro" id="IPR036206">
    <property type="entry name" value="ThiamineP_synth_sf"/>
</dbReference>
<dbReference type="InterPro" id="IPR022998">
    <property type="entry name" value="ThiamineP_synth_TenI"/>
</dbReference>
<dbReference type="InterPro" id="IPR034291">
    <property type="entry name" value="TMP_synthase"/>
</dbReference>
<dbReference type="NCBIfam" id="NF002904">
    <property type="entry name" value="PRK03512.1"/>
    <property type="match status" value="1"/>
</dbReference>
<dbReference type="NCBIfam" id="TIGR00693">
    <property type="entry name" value="thiE"/>
    <property type="match status" value="1"/>
</dbReference>
<dbReference type="PANTHER" id="PTHR20857">
    <property type="entry name" value="THIAMINE-PHOSPHATE PYROPHOSPHORYLASE"/>
    <property type="match status" value="1"/>
</dbReference>
<dbReference type="PANTHER" id="PTHR20857:SF15">
    <property type="entry name" value="THIAMINE-PHOSPHATE SYNTHASE"/>
    <property type="match status" value="1"/>
</dbReference>
<dbReference type="Pfam" id="PF02581">
    <property type="entry name" value="TMP-TENI"/>
    <property type="match status" value="1"/>
</dbReference>
<dbReference type="SUPFAM" id="SSF51391">
    <property type="entry name" value="Thiamin phosphate synthase"/>
    <property type="match status" value="1"/>
</dbReference>
<name>THIE_SALDC</name>
<comment type="function">
    <text evidence="1">Condenses 4-methyl-5-(beta-hydroxyethyl)thiazole monophosphate (THZ-P) and 2-methyl-4-amino-5-hydroxymethyl pyrimidine pyrophosphate (HMP-PP) to form thiamine monophosphate (TMP).</text>
</comment>
<comment type="catalytic activity">
    <reaction evidence="1">
        <text>2-[(2R,5Z)-2-carboxy-4-methylthiazol-5(2H)-ylidene]ethyl phosphate + 4-amino-2-methyl-5-(diphosphooxymethyl)pyrimidine + 2 H(+) = thiamine phosphate + CO2 + diphosphate</text>
        <dbReference type="Rhea" id="RHEA:47844"/>
        <dbReference type="ChEBI" id="CHEBI:15378"/>
        <dbReference type="ChEBI" id="CHEBI:16526"/>
        <dbReference type="ChEBI" id="CHEBI:33019"/>
        <dbReference type="ChEBI" id="CHEBI:37575"/>
        <dbReference type="ChEBI" id="CHEBI:57841"/>
        <dbReference type="ChEBI" id="CHEBI:62899"/>
        <dbReference type="EC" id="2.5.1.3"/>
    </reaction>
</comment>
<comment type="catalytic activity">
    <reaction evidence="1">
        <text>2-(2-carboxy-4-methylthiazol-5-yl)ethyl phosphate + 4-amino-2-methyl-5-(diphosphooxymethyl)pyrimidine + 2 H(+) = thiamine phosphate + CO2 + diphosphate</text>
        <dbReference type="Rhea" id="RHEA:47848"/>
        <dbReference type="ChEBI" id="CHEBI:15378"/>
        <dbReference type="ChEBI" id="CHEBI:16526"/>
        <dbReference type="ChEBI" id="CHEBI:33019"/>
        <dbReference type="ChEBI" id="CHEBI:37575"/>
        <dbReference type="ChEBI" id="CHEBI:57841"/>
        <dbReference type="ChEBI" id="CHEBI:62890"/>
        <dbReference type="EC" id="2.5.1.3"/>
    </reaction>
</comment>
<comment type="catalytic activity">
    <reaction evidence="1">
        <text>4-methyl-5-(2-phosphooxyethyl)-thiazole + 4-amino-2-methyl-5-(diphosphooxymethyl)pyrimidine + H(+) = thiamine phosphate + diphosphate</text>
        <dbReference type="Rhea" id="RHEA:22328"/>
        <dbReference type="ChEBI" id="CHEBI:15378"/>
        <dbReference type="ChEBI" id="CHEBI:33019"/>
        <dbReference type="ChEBI" id="CHEBI:37575"/>
        <dbReference type="ChEBI" id="CHEBI:57841"/>
        <dbReference type="ChEBI" id="CHEBI:58296"/>
        <dbReference type="EC" id="2.5.1.3"/>
    </reaction>
</comment>
<comment type="cofactor">
    <cofactor evidence="1">
        <name>Mg(2+)</name>
        <dbReference type="ChEBI" id="CHEBI:18420"/>
    </cofactor>
    <text evidence="1">Binds 1 Mg(2+) ion per subunit.</text>
</comment>
<comment type="pathway">
    <text evidence="1">Cofactor biosynthesis; thiamine diphosphate biosynthesis; thiamine phosphate from 4-amino-2-methyl-5-diphosphomethylpyrimidine and 4-methyl-5-(2-phosphoethyl)-thiazole: step 1/1.</text>
</comment>
<comment type="similarity">
    <text evidence="1">Belongs to the thiamine-phosphate synthase family.</text>
</comment>
<feature type="chain" id="PRO_1000093684" description="Thiamine-phosphate synthase">
    <location>
        <begin position="1"/>
        <end position="211"/>
    </location>
</feature>
<feature type="binding site" evidence="1">
    <location>
        <begin position="37"/>
        <end position="41"/>
    </location>
    <ligand>
        <name>4-amino-2-methyl-5-(diphosphooxymethyl)pyrimidine</name>
        <dbReference type="ChEBI" id="CHEBI:57841"/>
    </ligand>
</feature>
<feature type="binding site" evidence="1">
    <location>
        <position position="69"/>
    </location>
    <ligand>
        <name>4-amino-2-methyl-5-(diphosphooxymethyl)pyrimidine</name>
        <dbReference type="ChEBI" id="CHEBI:57841"/>
    </ligand>
</feature>
<feature type="binding site" evidence="1">
    <location>
        <position position="70"/>
    </location>
    <ligand>
        <name>Mg(2+)</name>
        <dbReference type="ChEBI" id="CHEBI:18420"/>
    </ligand>
</feature>
<feature type="binding site" evidence="1">
    <location>
        <position position="89"/>
    </location>
    <ligand>
        <name>Mg(2+)</name>
        <dbReference type="ChEBI" id="CHEBI:18420"/>
    </ligand>
</feature>
<feature type="binding site" evidence="1">
    <location>
        <position position="108"/>
    </location>
    <ligand>
        <name>4-amino-2-methyl-5-(diphosphooxymethyl)pyrimidine</name>
        <dbReference type="ChEBI" id="CHEBI:57841"/>
    </ligand>
</feature>
<feature type="binding site" evidence="1">
    <location>
        <begin position="134"/>
        <end position="136"/>
    </location>
    <ligand>
        <name>2-[(2R,5Z)-2-carboxy-4-methylthiazol-5(2H)-ylidene]ethyl phosphate</name>
        <dbReference type="ChEBI" id="CHEBI:62899"/>
    </ligand>
</feature>
<feature type="binding site" evidence="1">
    <location>
        <position position="137"/>
    </location>
    <ligand>
        <name>4-amino-2-methyl-5-(diphosphooxymethyl)pyrimidine</name>
        <dbReference type="ChEBI" id="CHEBI:57841"/>
    </ligand>
</feature>
<feature type="binding site" evidence="1">
    <location>
        <position position="166"/>
    </location>
    <ligand>
        <name>2-[(2R,5Z)-2-carboxy-4-methylthiazol-5(2H)-ylidene]ethyl phosphate</name>
        <dbReference type="ChEBI" id="CHEBI:62899"/>
    </ligand>
</feature>
<feature type="binding site" evidence="1">
    <location>
        <begin position="186"/>
        <end position="187"/>
    </location>
    <ligand>
        <name>2-[(2R,5Z)-2-carboxy-4-methylthiazol-5(2H)-ylidene]ethyl phosphate</name>
        <dbReference type="ChEBI" id="CHEBI:62899"/>
    </ligand>
</feature>
<gene>
    <name evidence="1" type="primary">thiE</name>
    <name type="ordered locus">SeD_A4569</name>
</gene>
<keyword id="KW-0460">Magnesium</keyword>
<keyword id="KW-0479">Metal-binding</keyword>
<keyword id="KW-0784">Thiamine biosynthesis</keyword>
<keyword id="KW-0808">Transferase</keyword>
<reference key="1">
    <citation type="journal article" date="2011" name="J. Bacteriol.">
        <title>Comparative genomics of 28 Salmonella enterica isolates: evidence for CRISPR-mediated adaptive sublineage evolution.</title>
        <authorList>
            <person name="Fricke W.F."/>
            <person name="Mammel M.K."/>
            <person name="McDermott P.F."/>
            <person name="Tartera C."/>
            <person name="White D.G."/>
            <person name="Leclerc J.E."/>
            <person name="Ravel J."/>
            <person name="Cebula T.A."/>
        </authorList>
    </citation>
    <scope>NUCLEOTIDE SEQUENCE [LARGE SCALE GENOMIC DNA]</scope>
    <source>
        <strain>CT_02021853</strain>
    </source>
</reference>
<organism>
    <name type="scientific">Salmonella dublin (strain CT_02021853)</name>
    <dbReference type="NCBI Taxonomy" id="439851"/>
    <lineage>
        <taxon>Bacteria</taxon>
        <taxon>Pseudomonadati</taxon>
        <taxon>Pseudomonadota</taxon>
        <taxon>Gammaproteobacteria</taxon>
        <taxon>Enterobacterales</taxon>
        <taxon>Enterobacteriaceae</taxon>
        <taxon>Salmonella</taxon>
    </lineage>
</organism>
<accession>B5FQK8</accession>